<dbReference type="EC" id="6.3.2.6" evidence="1"/>
<dbReference type="EMBL" id="CP000423">
    <property type="protein sequence ID" value="ABJ70526.1"/>
    <property type="molecule type" value="Genomic_DNA"/>
</dbReference>
<dbReference type="RefSeq" id="YP_806968.1">
    <property type="nucleotide sequence ID" value="NC_008526.1"/>
</dbReference>
<dbReference type="SMR" id="Q037U6"/>
<dbReference type="STRING" id="321967.LSEI_1754"/>
<dbReference type="PaxDb" id="321967-LSEI_1754"/>
<dbReference type="KEGG" id="lca:LSEI_1754"/>
<dbReference type="PATRIC" id="fig|321967.11.peg.1733"/>
<dbReference type="HOGENOM" id="CLU_061495_2_0_9"/>
<dbReference type="UniPathway" id="UPA00074">
    <property type="reaction ID" value="UER00131"/>
</dbReference>
<dbReference type="Proteomes" id="UP000001651">
    <property type="component" value="Chromosome"/>
</dbReference>
<dbReference type="GO" id="GO:0005524">
    <property type="term" value="F:ATP binding"/>
    <property type="evidence" value="ECO:0007669"/>
    <property type="project" value="UniProtKB-KW"/>
</dbReference>
<dbReference type="GO" id="GO:0004639">
    <property type="term" value="F:phosphoribosylaminoimidazolesuccinocarboxamide synthase activity"/>
    <property type="evidence" value="ECO:0007669"/>
    <property type="project" value="UniProtKB-UniRule"/>
</dbReference>
<dbReference type="GO" id="GO:0006189">
    <property type="term" value="P:'de novo' IMP biosynthetic process"/>
    <property type="evidence" value="ECO:0007669"/>
    <property type="project" value="UniProtKB-UniRule"/>
</dbReference>
<dbReference type="GO" id="GO:0009236">
    <property type="term" value="P:cobalamin biosynthetic process"/>
    <property type="evidence" value="ECO:0007669"/>
    <property type="project" value="InterPro"/>
</dbReference>
<dbReference type="CDD" id="cd01415">
    <property type="entry name" value="SAICAR_synt_PurC"/>
    <property type="match status" value="1"/>
</dbReference>
<dbReference type="Gene3D" id="3.30.470.20">
    <property type="entry name" value="ATP-grasp fold, B domain"/>
    <property type="match status" value="1"/>
</dbReference>
<dbReference type="Gene3D" id="3.30.200.20">
    <property type="entry name" value="Phosphorylase Kinase, domain 1"/>
    <property type="match status" value="1"/>
</dbReference>
<dbReference type="HAMAP" id="MF_00137">
    <property type="entry name" value="SAICAR_synth"/>
    <property type="match status" value="1"/>
</dbReference>
<dbReference type="InterPro" id="IPR028923">
    <property type="entry name" value="SAICAR_synt/ADE2_N"/>
</dbReference>
<dbReference type="InterPro" id="IPR033934">
    <property type="entry name" value="SAICAR_synt_PurC"/>
</dbReference>
<dbReference type="InterPro" id="IPR001636">
    <property type="entry name" value="SAICAR_synth"/>
</dbReference>
<dbReference type="InterPro" id="IPR050089">
    <property type="entry name" value="SAICAR_synthetase"/>
</dbReference>
<dbReference type="NCBIfam" id="TIGR00081">
    <property type="entry name" value="purC"/>
    <property type="match status" value="1"/>
</dbReference>
<dbReference type="PANTHER" id="PTHR43599">
    <property type="entry name" value="MULTIFUNCTIONAL PROTEIN ADE2"/>
    <property type="match status" value="1"/>
</dbReference>
<dbReference type="PANTHER" id="PTHR43599:SF3">
    <property type="entry name" value="SI:DKEY-6E2.2"/>
    <property type="match status" value="1"/>
</dbReference>
<dbReference type="Pfam" id="PF01259">
    <property type="entry name" value="SAICAR_synt"/>
    <property type="match status" value="1"/>
</dbReference>
<dbReference type="SUPFAM" id="SSF56104">
    <property type="entry name" value="SAICAR synthase-like"/>
    <property type="match status" value="1"/>
</dbReference>
<accession>Q037U6</accession>
<keyword id="KW-0067">ATP-binding</keyword>
<keyword id="KW-0436">Ligase</keyword>
<keyword id="KW-0547">Nucleotide-binding</keyword>
<keyword id="KW-0658">Purine biosynthesis</keyword>
<keyword id="KW-1185">Reference proteome</keyword>
<name>PUR7_LACP3</name>
<reference key="1">
    <citation type="journal article" date="2006" name="Proc. Natl. Acad. Sci. U.S.A.">
        <title>Comparative genomics of the lactic acid bacteria.</title>
        <authorList>
            <person name="Makarova K.S."/>
            <person name="Slesarev A."/>
            <person name="Wolf Y.I."/>
            <person name="Sorokin A."/>
            <person name="Mirkin B."/>
            <person name="Koonin E.V."/>
            <person name="Pavlov A."/>
            <person name="Pavlova N."/>
            <person name="Karamychev V."/>
            <person name="Polouchine N."/>
            <person name="Shakhova V."/>
            <person name="Grigoriev I."/>
            <person name="Lou Y."/>
            <person name="Rohksar D."/>
            <person name="Lucas S."/>
            <person name="Huang K."/>
            <person name="Goodstein D.M."/>
            <person name="Hawkins T."/>
            <person name="Plengvidhya V."/>
            <person name="Welker D."/>
            <person name="Hughes J."/>
            <person name="Goh Y."/>
            <person name="Benson A."/>
            <person name="Baldwin K."/>
            <person name="Lee J.-H."/>
            <person name="Diaz-Muniz I."/>
            <person name="Dosti B."/>
            <person name="Smeianov V."/>
            <person name="Wechter W."/>
            <person name="Barabote R."/>
            <person name="Lorca G."/>
            <person name="Altermann E."/>
            <person name="Barrangou R."/>
            <person name="Ganesan B."/>
            <person name="Xie Y."/>
            <person name="Rawsthorne H."/>
            <person name="Tamir D."/>
            <person name="Parker C."/>
            <person name="Breidt F."/>
            <person name="Broadbent J.R."/>
            <person name="Hutkins R."/>
            <person name="O'Sullivan D."/>
            <person name="Steele J."/>
            <person name="Unlu G."/>
            <person name="Saier M.H. Jr."/>
            <person name="Klaenhammer T."/>
            <person name="Richardson P."/>
            <person name="Kozyavkin S."/>
            <person name="Weimer B.C."/>
            <person name="Mills D.A."/>
        </authorList>
    </citation>
    <scope>NUCLEOTIDE SEQUENCE [LARGE SCALE GENOMIC DNA]</scope>
    <source>
        <strain>ATCC 334 / BCRC 17002 / CCUG 31169 / CIP 107868 / KCTC 3260 / NRRL B-441</strain>
    </source>
</reference>
<organism>
    <name type="scientific">Lacticaseibacillus paracasei (strain ATCC 334 / BCRC 17002 / CCUG 31169 / CIP 107868 / KCTC 3260 / NRRL B-441)</name>
    <name type="common">Lactobacillus paracasei</name>
    <dbReference type="NCBI Taxonomy" id="321967"/>
    <lineage>
        <taxon>Bacteria</taxon>
        <taxon>Bacillati</taxon>
        <taxon>Bacillota</taxon>
        <taxon>Bacilli</taxon>
        <taxon>Lactobacillales</taxon>
        <taxon>Lactobacillaceae</taxon>
        <taxon>Lacticaseibacillus</taxon>
    </lineage>
</organism>
<protein>
    <recommendedName>
        <fullName evidence="1">Phosphoribosylaminoimidazole-succinocarboxamide synthase</fullName>
        <ecNumber evidence="1">6.3.2.6</ecNumber>
    </recommendedName>
    <alternativeName>
        <fullName evidence="1">SAICAR synthetase</fullName>
    </alternativeName>
</protein>
<comment type="catalytic activity">
    <reaction evidence="1">
        <text>5-amino-1-(5-phospho-D-ribosyl)imidazole-4-carboxylate + L-aspartate + ATP = (2S)-2-[5-amino-1-(5-phospho-beta-D-ribosyl)imidazole-4-carboxamido]succinate + ADP + phosphate + 2 H(+)</text>
        <dbReference type="Rhea" id="RHEA:22628"/>
        <dbReference type="ChEBI" id="CHEBI:15378"/>
        <dbReference type="ChEBI" id="CHEBI:29991"/>
        <dbReference type="ChEBI" id="CHEBI:30616"/>
        <dbReference type="ChEBI" id="CHEBI:43474"/>
        <dbReference type="ChEBI" id="CHEBI:58443"/>
        <dbReference type="ChEBI" id="CHEBI:77657"/>
        <dbReference type="ChEBI" id="CHEBI:456216"/>
        <dbReference type="EC" id="6.3.2.6"/>
    </reaction>
</comment>
<comment type="pathway">
    <text evidence="1">Purine metabolism; IMP biosynthesis via de novo pathway; 5-amino-1-(5-phospho-D-ribosyl)imidazole-4-carboxamide from 5-amino-1-(5-phospho-D-ribosyl)imidazole-4-carboxylate: step 1/2.</text>
</comment>
<comment type="similarity">
    <text evidence="1">Belongs to the SAICAR synthetase family.</text>
</comment>
<feature type="chain" id="PRO_1000018718" description="Phosphoribosylaminoimidazole-succinocarboxamide synthase">
    <location>
        <begin position="1"/>
        <end position="241"/>
    </location>
</feature>
<proteinExistence type="inferred from homology"/>
<evidence type="ECO:0000255" key="1">
    <source>
        <dbReference type="HAMAP-Rule" id="MF_00137"/>
    </source>
</evidence>
<gene>
    <name evidence="1" type="primary">purC</name>
    <name type="ordered locus">LSEI_1754</name>
</gene>
<sequence>MNKTTLLYTGKAKQVYATDDPDVLWMAYTNQATALNGEKKAQIAHKGELNRAISTLLFKELTAAGIPTHYLDSPDSTTMIVKKAAMLPLEVVVRNYASGHFVTKFNVKPMMKLDPPIHEYYYKSDELGDPFMNEAQIFALHEATPEQLKQVHALTDRINTYLTQRFAAIGITLVDFKLEYGTLKDGTLVLADELSPDNFRLVDQQTGASLDKDVFRQNRGPLTPVYEEVLSRLQEKGAAHV</sequence>